<protein>
    <recommendedName>
        <fullName>Interleukin-6</fullName>
        <shortName>IL-6</shortName>
    </recommendedName>
</protein>
<evidence type="ECO:0000250" key="1"/>
<evidence type="ECO:0000250" key="2">
    <source>
        <dbReference type="UniProtKB" id="P05231"/>
    </source>
</evidence>
<evidence type="ECO:0000250" key="3">
    <source>
        <dbReference type="UniProtKB" id="P08505"/>
    </source>
</evidence>
<evidence type="ECO:0000255" key="4"/>
<evidence type="ECO:0000305" key="5"/>
<keyword id="KW-0011">Acute phase</keyword>
<keyword id="KW-0202">Cytokine</keyword>
<keyword id="KW-1015">Disulfide bond</keyword>
<keyword id="KW-0339">Growth factor</keyword>
<keyword id="KW-0597">Phosphoprotein</keyword>
<keyword id="KW-1185">Reference proteome</keyword>
<keyword id="KW-0964">Secreted</keyword>
<keyword id="KW-0732">Signal</keyword>
<gene>
    <name type="primary">IL6</name>
</gene>
<dbReference type="EMBL" id="L16914">
    <property type="protein sequence ID" value="AAA16620.1"/>
    <property type="molecule type" value="mRNA"/>
</dbReference>
<dbReference type="EMBL" id="D13227">
    <property type="protein sequence ID" value="BAA02507.1"/>
    <property type="molecule type" value="mRNA"/>
</dbReference>
<dbReference type="PIR" id="I46084">
    <property type="entry name" value="I46084"/>
</dbReference>
<dbReference type="RefSeq" id="NP_001009211.1">
    <property type="nucleotide sequence ID" value="NM_001009211.1"/>
</dbReference>
<dbReference type="SMR" id="P41683"/>
<dbReference type="FunCoup" id="P41683">
    <property type="interactions" value="90"/>
</dbReference>
<dbReference type="STRING" id="9685.ENSFCAP00000022423"/>
<dbReference type="PaxDb" id="9685-ENSFCAP00000022423"/>
<dbReference type="GeneID" id="493687"/>
<dbReference type="KEGG" id="fca:493687"/>
<dbReference type="CTD" id="3569"/>
<dbReference type="eggNOG" id="ENOG502S7Q4">
    <property type="taxonomic scope" value="Eukaryota"/>
</dbReference>
<dbReference type="InParanoid" id="P41683"/>
<dbReference type="OrthoDB" id="8943569at2759"/>
<dbReference type="Proteomes" id="UP000011712">
    <property type="component" value="Unplaced"/>
</dbReference>
<dbReference type="GO" id="GO:0005615">
    <property type="term" value="C:extracellular space"/>
    <property type="evidence" value="ECO:0000318"/>
    <property type="project" value="GO_Central"/>
</dbReference>
<dbReference type="GO" id="GO:0005896">
    <property type="term" value="C:interleukin-6 receptor complex"/>
    <property type="evidence" value="ECO:0000318"/>
    <property type="project" value="GO_Central"/>
</dbReference>
<dbReference type="GO" id="GO:0005125">
    <property type="term" value="F:cytokine activity"/>
    <property type="evidence" value="ECO:0000318"/>
    <property type="project" value="GO_Central"/>
</dbReference>
<dbReference type="GO" id="GO:0008083">
    <property type="term" value="F:growth factor activity"/>
    <property type="evidence" value="ECO:0000318"/>
    <property type="project" value="GO_Central"/>
</dbReference>
<dbReference type="GO" id="GO:0005138">
    <property type="term" value="F:interleukin-6 receptor binding"/>
    <property type="evidence" value="ECO:0007669"/>
    <property type="project" value="InterPro"/>
</dbReference>
<dbReference type="GO" id="GO:0006953">
    <property type="term" value="P:acute-phase response"/>
    <property type="evidence" value="ECO:0007669"/>
    <property type="project" value="UniProtKB-KW"/>
</dbReference>
<dbReference type="GO" id="GO:0042593">
    <property type="term" value="P:glucose homeostasis"/>
    <property type="evidence" value="ECO:0000250"/>
    <property type="project" value="UniProtKB"/>
</dbReference>
<dbReference type="GO" id="GO:0072574">
    <property type="term" value="P:hepatocyte proliferation"/>
    <property type="evidence" value="ECO:0000250"/>
    <property type="project" value="UniProtKB"/>
</dbReference>
<dbReference type="GO" id="GO:0070102">
    <property type="term" value="P:interleukin-6-mediated signaling pathway"/>
    <property type="evidence" value="ECO:0000250"/>
    <property type="project" value="UniProtKB"/>
</dbReference>
<dbReference type="GO" id="GO:0097421">
    <property type="term" value="P:liver regeneration"/>
    <property type="evidence" value="ECO:0000250"/>
    <property type="project" value="UniProtKB"/>
</dbReference>
<dbReference type="GO" id="GO:0008284">
    <property type="term" value="P:positive regulation of cell population proliferation"/>
    <property type="evidence" value="ECO:0000318"/>
    <property type="project" value="GO_Central"/>
</dbReference>
<dbReference type="GO" id="GO:0051240">
    <property type="term" value="P:positive regulation of multicellular organismal process"/>
    <property type="evidence" value="ECO:0007669"/>
    <property type="project" value="UniProtKB-ARBA"/>
</dbReference>
<dbReference type="GO" id="GO:0046427">
    <property type="term" value="P:positive regulation of receptor signaling pathway via JAK-STAT"/>
    <property type="evidence" value="ECO:0000318"/>
    <property type="project" value="GO_Central"/>
</dbReference>
<dbReference type="GO" id="GO:1904894">
    <property type="term" value="P:positive regulation of receptor signaling pathway via STAT"/>
    <property type="evidence" value="ECO:0000250"/>
    <property type="project" value="UniProtKB"/>
</dbReference>
<dbReference type="GO" id="GO:0070092">
    <property type="term" value="P:regulation of glucagon secretion"/>
    <property type="evidence" value="ECO:0000250"/>
    <property type="project" value="UniProtKB"/>
</dbReference>
<dbReference type="GO" id="GO:0050796">
    <property type="term" value="P:regulation of insulin secretion"/>
    <property type="evidence" value="ECO:0000250"/>
    <property type="project" value="UniProtKB"/>
</dbReference>
<dbReference type="GO" id="GO:0014823">
    <property type="term" value="P:response to activity"/>
    <property type="evidence" value="ECO:0000250"/>
    <property type="project" value="UniProtKB"/>
</dbReference>
<dbReference type="GO" id="GO:0072540">
    <property type="term" value="P:T-helper 17 cell lineage commitment"/>
    <property type="evidence" value="ECO:0000250"/>
    <property type="project" value="UniProtKB"/>
</dbReference>
<dbReference type="GO" id="GO:0010573">
    <property type="term" value="P:vascular endothelial growth factor production"/>
    <property type="evidence" value="ECO:0000250"/>
    <property type="project" value="UniProtKB"/>
</dbReference>
<dbReference type="FunFam" id="1.20.1250.10:FF:000006">
    <property type="entry name" value="Interleukin-6"/>
    <property type="match status" value="1"/>
</dbReference>
<dbReference type="Gene3D" id="1.20.1250.10">
    <property type="match status" value="1"/>
</dbReference>
<dbReference type="InterPro" id="IPR009079">
    <property type="entry name" value="4_helix_cytokine-like_core"/>
</dbReference>
<dbReference type="InterPro" id="IPR003574">
    <property type="entry name" value="IL-6-like"/>
</dbReference>
<dbReference type="InterPro" id="IPR030474">
    <property type="entry name" value="IL-6/GCSF/MGF"/>
</dbReference>
<dbReference type="InterPro" id="IPR030473">
    <property type="entry name" value="IL6/GCSF/MGF_CS"/>
</dbReference>
<dbReference type="PANTHER" id="PTHR48494">
    <property type="entry name" value="INTERLEUKIN-6"/>
    <property type="match status" value="1"/>
</dbReference>
<dbReference type="PANTHER" id="PTHR48494:SF1">
    <property type="entry name" value="INTERLEUKIN-6"/>
    <property type="match status" value="1"/>
</dbReference>
<dbReference type="Pfam" id="PF00489">
    <property type="entry name" value="IL6"/>
    <property type="match status" value="1"/>
</dbReference>
<dbReference type="PIRSF" id="PIRSF001935">
    <property type="entry name" value="IL6_MGF_GCSF"/>
    <property type="match status" value="1"/>
</dbReference>
<dbReference type="PRINTS" id="PR00433">
    <property type="entry name" value="IL6GCSFMGF"/>
</dbReference>
<dbReference type="PRINTS" id="PR00434">
    <property type="entry name" value="INTERLEUKIN6"/>
</dbReference>
<dbReference type="SMART" id="SM00126">
    <property type="entry name" value="IL6"/>
    <property type="match status" value="1"/>
</dbReference>
<dbReference type="SUPFAM" id="SSF47266">
    <property type="entry name" value="4-helical cytokines"/>
    <property type="match status" value="1"/>
</dbReference>
<dbReference type="PROSITE" id="PS00254">
    <property type="entry name" value="INTERLEUKIN_6"/>
    <property type="match status" value="1"/>
</dbReference>
<organism>
    <name type="scientific">Felis catus</name>
    <name type="common">Cat</name>
    <name type="synonym">Felis silvestris catus</name>
    <dbReference type="NCBI Taxonomy" id="9685"/>
    <lineage>
        <taxon>Eukaryota</taxon>
        <taxon>Metazoa</taxon>
        <taxon>Chordata</taxon>
        <taxon>Craniata</taxon>
        <taxon>Vertebrata</taxon>
        <taxon>Euteleostomi</taxon>
        <taxon>Mammalia</taxon>
        <taxon>Eutheria</taxon>
        <taxon>Laurasiatheria</taxon>
        <taxon>Carnivora</taxon>
        <taxon>Feliformia</taxon>
        <taxon>Felidae</taxon>
        <taxon>Felinae</taxon>
        <taxon>Felis</taxon>
    </lineage>
</organism>
<proteinExistence type="evidence at transcript level"/>
<feature type="signal peptide" evidence="4">
    <location>
        <begin position="1"/>
        <end position="27"/>
    </location>
</feature>
<feature type="chain" id="PRO_0000015580" description="Interleukin-6">
    <location>
        <begin position="28"/>
        <end position="208"/>
    </location>
</feature>
<feature type="modified residue" description="Phosphoserine" evidence="2">
    <location>
        <position position="77"/>
    </location>
</feature>
<feature type="disulfide bond" evidence="1">
    <location>
        <begin position="68"/>
        <end position="74"/>
    </location>
</feature>
<feature type="disulfide bond" evidence="1">
    <location>
        <begin position="97"/>
        <end position="107"/>
    </location>
</feature>
<feature type="sequence conflict" description="In Ref. 2; AAA16620." evidence="5" ref="2">
    <original>T</original>
    <variation>N</variation>
    <location>
        <position position="2"/>
    </location>
</feature>
<feature type="sequence conflict" description="In Ref. 2; AAA16620." evidence="5" ref="2">
    <original>S</original>
    <variation>P</variation>
    <location>
        <position position="45"/>
    </location>
</feature>
<feature type="sequence conflict" description="In Ref. 2; AAA16620." evidence="5" ref="2">
    <original>E</original>
    <variation>K</variation>
    <location>
        <position position="133"/>
    </location>
</feature>
<feature type="sequence conflict" description="In Ref. 2; AAA16620." evidence="5" ref="2">
    <original>AKLQSQEEWLRHTTI</original>
    <variation>LSCSHRRVAEAHNN</variation>
    <location>
        <begin position="173"/>
        <end position="187"/>
    </location>
</feature>
<feature type="sequence conflict" description="In Ref. 2; AAA16620." evidence="5" ref="2">
    <original>FS</original>
    <variation>LR</variation>
    <location>
        <begin position="200"/>
        <end position="201"/>
    </location>
</feature>
<comment type="function">
    <text evidence="2">Cytokine with a wide variety of biological functions in immunity, tissue regeneration, and metabolism. Binds to IL6R, then the complex associates to the signaling subunit IL6ST/gp130 to trigger the intracellular IL6-signaling pathway. The interaction with the membrane-bound IL6R and IL6ST stimulates 'classic signaling', whereas the binding of IL6 and soluble IL6R to IL6ST stimulates 'trans-signaling'. Alternatively, 'cluster signaling' occurs when membrane-bound IL6:IL6R complexes on transmitter cells activate IL6ST receptors on neighboring receiver cells.</text>
</comment>
<comment type="function">
    <text evidence="2 3">IL6 is a potent inducer of the acute phase response. Rapid production of IL6 contributes to host defense during infection and tissue injury, but excessive IL6 synthesis is involved in disease pathology. In the innate immune response, is synthesized by myeloid cells, such as macrophages and dendritic cells, upon recognition of pathogens through toll-like receptors (TLRs) at the site of infection or tissue injury (By similarity). In the adaptive immune response, is required for the differentiation of B cells into immunoglobulin-secreting cells. Plays a major role in the differentiation of CD4(+) T cell subsets. Essential factor for the development of T follicular helper (Tfh) cells that are required for the induction of germinal-center formation. Required to drive naive CD4(+) T cells to the Th17 lineage. Also required for proliferation of myeloma cells and the survival of plasmablast cells (By similarity).</text>
</comment>
<comment type="function">
    <text evidence="2 3">Acts as an essential factor in bone homeostasis and on vessels directly or indirectly by induction of VEGF, resulting in increased angiogenesis activity and vascular permeability. Induces, through 'trans-signaling' and synergistically with IL1B and TNF, the production of VEGF. Involved in metabolic controls, is discharged into the bloodstream after muscle contraction increasing lipolysis and improving insulin resistance (By similarity). 'Trans-signaling' in central nervous system also regulates energy and glucose homeostasis. Mediates, through GLP-1, crosstalk between insulin-sensitive tissues, intestinal L cells and pancreatic islets to adapt to changes in insulin demand (By similarity). Also acts as a myokine (By similarity). Plays a protective role during liver injury, being required for maintenance of tissue regeneration (By similarity). Also has a pivotal role in iron metabolism by regulating HAMP/hepcidin expression upon inflammation or bacterial infection (By similarity). Through activation of IL6ST-YAP-NOTCH pathway, induces inflammation-induced epithelial regeneration (By similarity).</text>
</comment>
<comment type="subunit">
    <text evidence="2">Component of a hexamer of two molecules each of IL6, IL6R and IL6ST; first binds to IL6R to associate with the signaling subunit IL6ST. Interacts with IL6R (via the N-terminal ectodomain); this interaction may be affected by IL6R-binding with SORL1, hence decreasing IL6 cis signaling. Interacts with SORL1 (via the N-terminal ectodomain); this interaction leads to IL6 internalization and lysosomal degradation. May form a trimeric complex with the soluble SORL1 ectodomain and soluble IL6R receptor; this interaction might stabilize circulating IL6, hence promoting IL6 trans signaling.</text>
</comment>
<comment type="subcellular location">
    <subcellularLocation>
        <location evidence="2">Secreted</location>
    </subcellularLocation>
</comment>
<comment type="similarity">
    <text evidence="5">Belongs to the IL-6 superfamily.</text>
</comment>
<accession>P41683</accession>
<reference key="1">
    <citation type="journal article" date="1993" name="J. Vet. Med. Sci.">
        <title>Molecular cloning of feline interleukin-6 cDNA.</title>
        <authorList>
            <person name="Ohashi T."/>
            <person name="Matsumoto Y."/>
            <person name="Watari T."/>
            <person name="Goitsuka R."/>
            <person name="Tsujimoto H."/>
            <person name="Hasegawa A."/>
        </authorList>
    </citation>
    <scope>NUCLEOTIDE SEQUENCE [MRNA]</scope>
</reference>
<reference key="2">
    <citation type="journal article" date="1993" name="Proc. Soc. Exp. Biol. Med.">
        <title>Molecular cloning and characterization of a cDNA encoding feline interleukin-6.</title>
        <authorList>
            <person name="Bradley W.G."/>
            <person name="Gibbs C."/>
            <person name="Kraus L."/>
            <person name="Good R.A."/>
            <person name="Day N.K."/>
        </authorList>
    </citation>
    <scope>NUCLEOTIDE SEQUENCE [MRNA]</scope>
    <source>
        <tissue>Lymphocyte</tissue>
    </source>
</reference>
<name>IL6_FELCA</name>
<sequence length="208" mass="23401">MTFLSTSAFSPLAFSLGLLLVVATAFPTPGPLGGDATSNRLPLTSADKMEELIKYILGKISALKKEMCDNYNKCEDSKEALAENNLNLPKLAEKDGCFQSGFNQETCLTRITTGLQEFQIYLKFLQDKYEGDEENAKSVYTSTNVLLQMLKRKGKNQDEVTIPVPTVEVGLQAKLQSQEEWLRHTTIHLTLRRLEDFLQFSLRAVRIM</sequence>